<sequence length="316" mass="35093">MSDISKASLPKAIFLMGPTASGKTALAIELRKILPVELISVDSALIYKGMDIGTAKPNVEELLAAPHRLLDIRDPSQAYSAADFRRDALAEMADITAAGRIPLLVGGTMLYFKALLEGLSPLPSADPEVRARIEQQAAEQGWESLHRQLQEVDPVAAARIHPNDPQRLSRALEVFFISGKTLTELTQTSGDALPYQVHQFAIAPASRELLHQRIEQRFHQMLASGFEAEVRALFARGDLHTDLPSIRCVGYRQMWSYLEGEISYDEMVYRGVCATRQLAKRQITWLRGWEGVHWLDSEKPEQARDEVLQVVGAIAG</sequence>
<keyword id="KW-0067">ATP-binding</keyword>
<keyword id="KW-0460">Magnesium</keyword>
<keyword id="KW-0547">Nucleotide-binding</keyword>
<keyword id="KW-1185">Reference proteome</keyword>
<keyword id="KW-0808">Transferase</keyword>
<keyword id="KW-0819">tRNA processing</keyword>
<organism>
    <name type="scientific">Escherichia coli O127:H6 (strain E2348/69 / EPEC)</name>
    <dbReference type="NCBI Taxonomy" id="574521"/>
    <lineage>
        <taxon>Bacteria</taxon>
        <taxon>Pseudomonadati</taxon>
        <taxon>Pseudomonadota</taxon>
        <taxon>Gammaproteobacteria</taxon>
        <taxon>Enterobacterales</taxon>
        <taxon>Enterobacteriaceae</taxon>
        <taxon>Escherichia</taxon>
    </lineage>
</organism>
<accession>B7UQI0</accession>
<comment type="function">
    <text evidence="1">Catalyzes the transfer of a dimethylallyl group onto the adenine at position 37 in tRNAs that read codons beginning with uridine, leading to the formation of N6-(dimethylallyl)adenosine (i(6)A).</text>
</comment>
<comment type="catalytic activity">
    <reaction evidence="1">
        <text>adenosine(37) in tRNA + dimethylallyl diphosphate = N(6)-dimethylallyladenosine(37) in tRNA + diphosphate</text>
        <dbReference type="Rhea" id="RHEA:26482"/>
        <dbReference type="Rhea" id="RHEA-COMP:10162"/>
        <dbReference type="Rhea" id="RHEA-COMP:10375"/>
        <dbReference type="ChEBI" id="CHEBI:33019"/>
        <dbReference type="ChEBI" id="CHEBI:57623"/>
        <dbReference type="ChEBI" id="CHEBI:74411"/>
        <dbReference type="ChEBI" id="CHEBI:74415"/>
        <dbReference type="EC" id="2.5.1.75"/>
    </reaction>
</comment>
<comment type="cofactor">
    <cofactor evidence="1">
        <name>Mg(2+)</name>
        <dbReference type="ChEBI" id="CHEBI:18420"/>
    </cofactor>
</comment>
<comment type="subunit">
    <text evidence="1">Monomer.</text>
</comment>
<comment type="similarity">
    <text evidence="1">Belongs to the IPP transferase family.</text>
</comment>
<dbReference type="EC" id="2.5.1.75" evidence="1"/>
<dbReference type="EMBL" id="FM180568">
    <property type="protein sequence ID" value="CAS12042.1"/>
    <property type="molecule type" value="Genomic_DNA"/>
</dbReference>
<dbReference type="RefSeq" id="WP_001280365.1">
    <property type="nucleotide sequence ID" value="NC_011601.1"/>
</dbReference>
<dbReference type="SMR" id="B7UQI0"/>
<dbReference type="KEGG" id="ecg:E2348C_4494"/>
<dbReference type="HOGENOM" id="CLU_032616_0_0_6"/>
<dbReference type="Proteomes" id="UP000008205">
    <property type="component" value="Chromosome"/>
</dbReference>
<dbReference type="GO" id="GO:0005524">
    <property type="term" value="F:ATP binding"/>
    <property type="evidence" value="ECO:0007669"/>
    <property type="project" value="UniProtKB-UniRule"/>
</dbReference>
<dbReference type="GO" id="GO:0052381">
    <property type="term" value="F:tRNA dimethylallyltransferase activity"/>
    <property type="evidence" value="ECO:0007669"/>
    <property type="project" value="UniProtKB-UniRule"/>
</dbReference>
<dbReference type="GO" id="GO:0006400">
    <property type="term" value="P:tRNA modification"/>
    <property type="evidence" value="ECO:0007669"/>
    <property type="project" value="TreeGrafter"/>
</dbReference>
<dbReference type="FunFam" id="1.10.20.140:FF:000001">
    <property type="entry name" value="tRNA dimethylallyltransferase"/>
    <property type="match status" value="1"/>
</dbReference>
<dbReference type="FunFam" id="1.10.287.890:FF:000001">
    <property type="entry name" value="tRNA dimethylallyltransferase"/>
    <property type="match status" value="1"/>
</dbReference>
<dbReference type="Gene3D" id="1.10.20.140">
    <property type="match status" value="1"/>
</dbReference>
<dbReference type="Gene3D" id="1.10.287.890">
    <property type="entry name" value="Crystal structure of tRNA isopentenylpyrophosphate transferase (bh2366) domain"/>
    <property type="match status" value="1"/>
</dbReference>
<dbReference type="Gene3D" id="3.40.50.300">
    <property type="entry name" value="P-loop containing nucleotide triphosphate hydrolases"/>
    <property type="match status" value="1"/>
</dbReference>
<dbReference type="HAMAP" id="MF_00185">
    <property type="entry name" value="IPP_trans"/>
    <property type="match status" value="1"/>
</dbReference>
<dbReference type="InterPro" id="IPR039657">
    <property type="entry name" value="Dimethylallyltransferase"/>
</dbReference>
<dbReference type="InterPro" id="IPR018022">
    <property type="entry name" value="IPT"/>
</dbReference>
<dbReference type="InterPro" id="IPR027417">
    <property type="entry name" value="P-loop_NTPase"/>
</dbReference>
<dbReference type="NCBIfam" id="TIGR00174">
    <property type="entry name" value="miaA"/>
    <property type="match status" value="1"/>
</dbReference>
<dbReference type="PANTHER" id="PTHR11088">
    <property type="entry name" value="TRNA DIMETHYLALLYLTRANSFERASE"/>
    <property type="match status" value="1"/>
</dbReference>
<dbReference type="PANTHER" id="PTHR11088:SF60">
    <property type="entry name" value="TRNA DIMETHYLALLYLTRANSFERASE"/>
    <property type="match status" value="1"/>
</dbReference>
<dbReference type="Pfam" id="PF01715">
    <property type="entry name" value="IPPT"/>
    <property type="match status" value="1"/>
</dbReference>
<dbReference type="SUPFAM" id="SSF52540">
    <property type="entry name" value="P-loop containing nucleoside triphosphate hydrolases"/>
    <property type="match status" value="1"/>
</dbReference>
<name>MIAA_ECO27</name>
<reference key="1">
    <citation type="journal article" date="2009" name="J. Bacteriol.">
        <title>Complete genome sequence and comparative genome analysis of enteropathogenic Escherichia coli O127:H6 strain E2348/69.</title>
        <authorList>
            <person name="Iguchi A."/>
            <person name="Thomson N.R."/>
            <person name="Ogura Y."/>
            <person name="Saunders D."/>
            <person name="Ooka T."/>
            <person name="Henderson I.R."/>
            <person name="Harris D."/>
            <person name="Asadulghani M."/>
            <person name="Kurokawa K."/>
            <person name="Dean P."/>
            <person name="Kenny B."/>
            <person name="Quail M.A."/>
            <person name="Thurston S."/>
            <person name="Dougan G."/>
            <person name="Hayashi T."/>
            <person name="Parkhill J."/>
            <person name="Frankel G."/>
        </authorList>
    </citation>
    <scope>NUCLEOTIDE SEQUENCE [LARGE SCALE GENOMIC DNA]</scope>
    <source>
        <strain>E2348/69 / EPEC</strain>
    </source>
</reference>
<protein>
    <recommendedName>
        <fullName evidence="1">tRNA dimethylallyltransferase</fullName>
        <ecNumber evidence="1">2.5.1.75</ecNumber>
    </recommendedName>
    <alternativeName>
        <fullName evidence="1">Dimethylallyl diphosphate:tRNA dimethylallyltransferase</fullName>
        <shortName evidence="1">DMAPP:tRNA dimethylallyltransferase</shortName>
        <shortName evidence="1">DMATase</shortName>
    </alternativeName>
    <alternativeName>
        <fullName evidence="1">Isopentenyl-diphosphate:tRNA isopentenyltransferase</fullName>
        <shortName evidence="1">IPP transferase</shortName>
        <shortName evidence="1">IPPT</shortName>
        <shortName evidence="1">IPTase</shortName>
    </alternativeName>
</protein>
<feature type="chain" id="PRO_0000377158" description="tRNA dimethylallyltransferase">
    <location>
        <begin position="1"/>
        <end position="316"/>
    </location>
</feature>
<feature type="region of interest" description="Interaction with substrate tRNA" evidence="1">
    <location>
        <begin position="42"/>
        <end position="45"/>
    </location>
</feature>
<feature type="region of interest" description="Interaction with substrate tRNA" evidence="1">
    <location>
        <begin position="166"/>
        <end position="170"/>
    </location>
</feature>
<feature type="region of interest" description="Interaction with substrate tRNA" evidence="1">
    <location>
        <begin position="247"/>
        <end position="252"/>
    </location>
</feature>
<feature type="region of interest" description="Interaction with substrate tRNA" evidence="1">
    <location>
        <begin position="280"/>
        <end position="287"/>
    </location>
</feature>
<feature type="binding site" evidence="1">
    <location>
        <begin position="17"/>
        <end position="24"/>
    </location>
    <ligand>
        <name>ATP</name>
        <dbReference type="ChEBI" id="CHEBI:30616"/>
    </ligand>
</feature>
<feature type="binding site" evidence="1">
    <location>
        <begin position="19"/>
        <end position="24"/>
    </location>
    <ligand>
        <name>substrate</name>
    </ligand>
</feature>
<feature type="site" description="Interaction with substrate tRNA" evidence="1">
    <location>
        <position position="108"/>
    </location>
</feature>
<feature type="site" description="Interaction with substrate tRNA" evidence="1">
    <location>
        <position position="130"/>
    </location>
</feature>
<evidence type="ECO:0000255" key="1">
    <source>
        <dbReference type="HAMAP-Rule" id="MF_00185"/>
    </source>
</evidence>
<proteinExistence type="inferred from homology"/>
<gene>
    <name evidence="1" type="primary">miaA</name>
    <name type="ordered locus">E2348C_4494</name>
</gene>